<reference key="1">
    <citation type="journal article" date="2006" name="Genome Res.">
        <title>Massive genome erosion and functional adaptations provide insights into the symbiotic lifestyle of Sodalis glossinidius in the tsetse host.</title>
        <authorList>
            <person name="Toh H."/>
            <person name="Weiss B.L."/>
            <person name="Perkin S.A.H."/>
            <person name="Yamashita A."/>
            <person name="Oshima K."/>
            <person name="Hattori M."/>
            <person name="Aksoy S."/>
        </authorList>
    </citation>
    <scope>NUCLEOTIDE SEQUENCE [LARGE SCALE GENOMIC DNA]</scope>
    <source>
        <strain>morsitans</strain>
    </source>
</reference>
<accession>Q2NQ72</accession>
<protein>
    <recommendedName>
        <fullName evidence="1">tRNA modification GTPase MnmE</fullName>
        <ecNumber evidence="1">3.6.-.-</ecNumber>
    </recommendedName>
</protein>
<sequence>MSQTDTITALATPPGRGSVGILRVSGPLAAPVARALLGKLPRPRQAEYLPFRDDDGTTLDQGIALFFPGPHSFTGEDVLELQGHGGPVILDLLLQRIVAMPGVRIARPGEFSERAFLNDKLDLAQAEAIADLIDASSAQAARSAINSLQGAFSGRIHELVKALTNLRIYVEAAIDFPDEEIDFLSEGKIEASLNDVIARLERVRTEARQGSLLREGMKVVIAGKPNAGKSSLLNALAGREAAIVTAIAGTTRDVLREHIHLDGMPLHIIDTAGLRNAGDEVERIGIERAWREIEQADHVLLMVDGAATPLSDPDMLWPAFIARLPSGMPVTVVRNKADLTGESVAISDISGYLLITLSAQSGVGMDLLRTHLKQSMGFTGGTEGGFLARRRHLDALETAATHLQQGKEQLVSACYGELLAEELRLAQQSLSEITGEFSSDDLLGRIFSSFCIGK</sequence>
<feature type="chain" id="PRO_1000048880" description="tRNA modification GTPase MnmE">
    <location>
        <begin position="1"/>
        <end position="454"/>
    </location>
</feature>
<feature type="domain" description="TrmE-type G">
    <location>
        <begin position="216"/>
        <end position="377"/>
    </location>
</feature>
<feature type="binding site" evidence="1">
    <location>
        <position position="23"/>
    </location>
    <ligand>
        <name>(6S)-5-formyl-5,6,7,8-tetrahydrofolate</name>
        <dbReference type="ChEBI" id="CHEBI:57457"/>
    </ligand>
</feature>
<feature type="binding site" evidence="1">
    <location>
        <position position="80"/>
    </location>
    <ligand>
        <name>(6S)-5-formyl-5,6,7,8-tetrahydrofolate</name>
        <dbReference type="ChEBI" id="CHEBI:57457"/>
    </ligand>
</feature>
<feature type="binding site" evidence="1">
    <location>
        <position position="120"/>
    </location>
    <ligand>
        <name>(6S)-5-formyl-5,6,7,8-tetrahydrofolate</name>
        <dbReference type="ChEBI" id="CHEBI:57457"/>
    </ligand>
</feature>
<feature type="binding site" evidence="1">
    <location>
        <begin position="226"/>
        <end position="231"/>
    </location>
    <ligand>
        <name>GTP</name>
        <dbReference type="ChEBI" id="CHEBI:37565"/>
    </ligand>
</feature>
<feature type="binding site" evidence="1">
    <location>
        <position position="226"/>
    </location>
    <ligand>
        <name>K(+)</name>
        <dbReference type="ChEBI" id="CHEBI:29103"/>
    </ligand>
</feature>
<feature type="binding site" evidence="1">
    <location>
        <position position="230"/>
    </location>
    <ligand>
        <name>Mg(2+)</name>
        <dbReference type="ChEBI" id="CHEBI:18420"/>
    </ligand>
</feature>
<feature type="binding site" evidence="1">
    <location>
        <begin position="245"/>
        <end position="251"/>
    </location>
    <ligand>
        <name>GTP</name>
        <dbReference type="ChEBI" id="CHEBI:37565"/>
    </ligand>
</feature>
<feature type="binding site" evidence="1">
    <location>
        <position position="245"/>
    </location>
    <ligand>
        <name>K(+)</name>
        <dbReference type="ChEBI" id="CHEBI:29103"/>
    </ligand>
</feature>
<feature type="binding site" evidence="1">
    <location>
        <position position="247"/>
    </location>
    <ligand>
        <name>K(+)</name>
        <dbReference type="ChEBI" id="CHEBI:29103"/>
    </ligand>
</feature>
<feature type="binding site" evidence="1">
    <location>
        <position position="250"/>
    </location>
    <ligand>
        <name>K(+)</name>
        <dbReference type="ChEBI" id="CHEBI:29103"/>
    </ligand>
</feature>
<feature type="binding site" evidence="1">
    <location>
        <position position="251"/>
    </location>
    <ligand>
        <name>Mg(2+)</name>
        <dbReference type="ChEBI" id="CHEBI:18420"/>
    </ligand>
</feature>
<feature type="binding site" evidence="1">
    <location>
        <begin position="270"/>
        <end position="273"/>
    </location>
    <ligand>
        <name>GTP</name>
        <dbReference type="ChEBI" id="CHEBI:37565"/>
    </ligand>
</feature>
<feature type="binding site" evidence="1">
    <location>
        <begin position="335"/>
        <end position="338"/>
    </location>
    <ligand>
        <name>GTP</name>
        <dbReference type="ChEBI" id="CHEBI:37565"/>
    </ligand>
</feature>
<feature type="binding site" evidence="1">
    <location>
        <position position="454"/>
    </location>
    <ligand>
        <name>(6S)-5-formyl-5,6,7,8-tetrahydrofolate</name>
        <dbReference type="ChEBI" id="CHEBI:57457"/>
    </ligand>
</feature>
<keyword id="KW-0963">Cytoplasm</keyword>
<keyword id="KW-0342">GTP-binding</keyword>
<keyword id="KW-0378">Hydrolase</keyword>
<keyword id="KW-0460">Magnesium</keyword>
<keyword id="KW-0479">Metal-binding</keyword>
<keyword id="KW-0547">Nucleotide-binding</keyword>
<keyword id="KW-0630">Potassium</keyword>
<keyword id="KW-0819">tRNA processing</keyword>
<comment type="function">
    <text evidence="1">Exhibits a very high intrinsic GTPase hydrolysis rate. Involved in the addition of a carboxymethylaminomethyl (cmnm) group at the wobble position (U34) of certain tRNAs, forming tRNA-cmnm(5)s(2)U34.</text>
</comment>
<comment type="cofactor">
    <cofactor evidence="1">
        <name>K(+)</name>
        <dbReference type="ChEBI" id="CHEBI:29103"/>
    </cofactor>
    <text evidence="1">Binds 1 potassium ion per subunit.</text>
</comment>
<comment type="subunit">
    <text evidence="1">Homodimer. Heterotetramer of two MnmE and two MnmG subunits.</text>
</comment>
<comment type="subcellular location">
    <subcellularLocation>
        <location evidence="1">Cytoplasm</location>
    </subcellularLocation>
</comment>
<comment type="similarity">
    <text evidence="1">Belongs to the TRAFAC class TrmE-Era-EngA-EngB-Septin-like GTPase superfamily. TrmE GTPase family.</text>
</comment>
<organism>
    <name type="scientific">Sodalis glossinidius (strain morsitans)</name>
    <dbReference type="NCBI Taxonomy" id="343509"/>
    <lineage>
        <taxon>Bacteria</taxon>
        <taxon>Pseudomonadati</taxon>
        <taxon>Pseudomonadota</taxon>
        <taxon>Gammaproteobacteria</taxon>
        <taxon>Enterobacterales</taxon>
        <taxon>Bruguierivoracaceae</taxon>
        <taxon>Sodalis</taxon>
    </lineage>
</organism>
<name>MNME_SODGM</name>
<dbReference type="EC" id="3.6.-.-" evidence="1"/>
<dbReference type="EMBL" id="AP008232">
    <property type="protein sequence ID" value="BAE75703.1"/>
    <property type="molecule type" value="Genomic_DNA"/>
</dbReference>
<dbReference type="RefSeq" id="WP_011412233.1">
    <property type="nucleotide sequence ID" value="NC_007712.1"/>
</dbReference>
<dbReference type="SMR" id="Q2NQ72"/>
<dbReference type="STRING" id="343509.SG2428"/>
<dbReference type="KEGG" id="sgl:SG2428"/>
<dbReference type="eggNOG" id="COG0486">
    <property type="taxonomic scope" value="Bacteria"/>
</dbReference>
<dbReference type="HOGENOM" id="CLU_019624_4_1_6"/>
<dbReference type="OrthoDB" id="9805918at2"/>
<dbReference type="BioCyc" id="SGLO343509:SGP1_RS22045-MONOMER"/>
<dbReference type="Proteomes" id="UP000001932">
    <property type="component" value="Chromosome"/>
</dbReference>
<dbReference type="GO" id="GO:0005829">
    <property type="term" value="C:cytosol"/>
    <property type="evidence" value="ECO:0007669"/>
    <property type="project" value="TreeGrafter"/>
</dbReference>
<dbReference type="GO" id="GO:0005525">
    <property type="term" value="F:GTP binding"/>
    <property type="evidence" value="ECO:0007669"/>
    <property type="project" value="UniProtKB-UniRule"/>
</dbReference>
<dbReference type="GO" id="GO:0003924">
    <property type="term" value="F:GTPase activity"/>
    <property type="evidence" value="ECO:0007669"/>
    <property type="project" value="UniProtKB-UniRule"/>
</dbReference>
<dbReference type="GO" id="GO:0046872">
    <property type="term" value="F:metal ion binding"/>
    <property type="evidence" value="ECO:0007669"/>
    <property type="project" value="UniProtKB-KW"/>
</dbReference>
<dbReference type="GO" id="GO:0030488">
    <property type="term" value="P:tRNA methylation"/>
    <property type="evidence" value="ECO:0007669"/>
    <property type="project" value="TreeGrafter"/>
</dbReference>
<dbReference type="GO" id="GO:0002098">
    <property type="term" value="P:tRNA wobble uridine modification"/>
    <property type="evidence" value="ECO:0007669"/>
    <property type="project" value="TreeGrafter"/>
</dbReference>
<dbReference type="CDD" id="cd04164">
    <property type="entry name" value="trmE"/>
    <property type="match status" value="1"/>
</dbReference>
<dbReference type="CDD" id="cd14858">
    <property type="entry name" value="TrmE_N"/>
    <property type="match status" value="1"/>
</dbReference>
<dbReference type="FunFam" id="3.30.1360.120:FF:000001">
    <property type="entry name" value="tRNA modification GTPase MnmE"/>
    <property type="match status" value="1"/>
</dbReference>
<dbReference type="FunFam" id="3.40.50.300:FF:000249">
    <property type="entry name" value="tRNA modification GTPase MnmE"/>
    <property type="match status" value="1"/>
</dbReference>
<dbReference type="Gene3D" id="3.40.50.300">
    <property type="entry name" value="P-loop containing nucleotide triphosphate hydrolases"/>
    <property type="match status" value="1"/>
</dbReference>
<dbReference type="Gene3D" id="3.30.1360.120">
    <property type="entry name" value="Probable tRNA modification gtpase trme, domain 1"/>
    <property type="match status" value="1"/>
</dbReference>
<dbReference type="Gene3D" id="1.20.120.430">
    <property type="entry name" value="tRNA modification GTPase MnmE domain 2"/>
    <property type="match status" value="1"/>
</dbReference>
<dbReference type="HAMAP" id="MF_00379">
    <property type="entry name" value="GTPase_MnmE"/>
    <property type="match status" value="1"/>
</dbReference>
<dbReference type="InterPro" id="IPR031168">
    <property type="entry name" value="G_TrmE"/>
</dbReference>
<dbReference type="InterPro" id="IPR006073">
    <property type="entry name" value="GTP-bd"/>
</dbReference>
<dbReference type="InterPro" id="IPR018948">
    <property type="entry name" value="GTP-bd_TrmE_N"/>
</dbReference>
<dbReference type="InterPro" id="IPR004520">
    <property type="entry name" value="GTPase_MnmE"/>
</dbReference>
<dbReference type="InterPro" id="IPR027368">
    <property type="entry name" value="MnmE_dom2"/>
</dbReference>
<dbReference type="InterPro" id="IPR025867">
    <property type="entry name" value="MnmE_helical"/>
</dbReference>
<dbReference type="InterPro" id="IPR027417">
    <property type="entry name" value="P-loop_NTPase"/>
</dbReference>
<dbReference type="InterPro" id="IPR005225">
    <property type="entry name" value="Small_GTP-bd"/>
</dbReference>
<dbReference type="InterPro" id="IPR027266">
    <property type="entry name" value="TrmE/GcvT_dom1"/>
</dbReference>
<dbReference type="NCBIfam" id="TIGR00450">
    <property type="entry name" value="mnmE_trmE_thdF"/>
    <property type="match status" value="1"/>
</dbReference>
<dbReference type="NCBIfam" id="NF003661">
    <property type="entry name" value="PRK05291.1-3"/>
    <property type="match status" value="1"/>
</dbReference>
<dbReference type="NCBIfam" id="TIGR00231">
    <property type="entry name" value="small_GTP"/>
    <property type="match status" value="1"/>
</dbReference>
<dbReference type="PANTHER" id="PTHR42714">
    <property type="entry name" value="TRNA MODIFICATION GTPASE GTPBP3"/>
    <property type="match status" value="1"/>
</dbReference>
<dbReference type="PANTHER" id="PTHR42714:SF2">
    <property type="entry name" value="TRNA MODIFICATION GTPASE GTPBP3, MITOCHONDRIAL"/>
    <property type="match status" value="1"/>
</dbReference>
<dbReference type="Pfam" id="PF01926">
    <property type="entry name" value="MMR_HSR1"/>
    <property type="match status" value="1"/>
</dbReference>
<dbReference type="Pfam" id="PF12631">
    <property type="entry name" value="MnmE_helical"/>
    <property type="match status" value="1"/>
</dbReference>
<dbReference type="Pfam" id="PF10396">
    <property type="entry name" value="TrmE_N"/>
    <property type="match status" value="1"/>
</dbReference>
<dbReference type="SUPFAM" id="SSF52540">
    <property type="entry name" value="P-loop containing nucleoside triphosphate hydrolases"/>
    <property type="match status" value="1"/>
</dbReference>
<dbReference type="SUPFAM" id="SSF116878">
    <property type="entry name" value="TrmE connector domain"/>
    <property type="match status" value="1"/>
</dbReference>
<dbReference type="PROSITE" id="PS51709">
    <property type="entry name" value="G_TRME"/>
    <property type="match status" value="1"/>
</dbReference>
<evidence type="ECO:0000255" key="1">
    <source>
        <dbReference type="HAMAP-Rule" id="MF_00379"/>
    </source>
</evidence>
<gene>
    <name evidence="1" type="primary">mnmE</name>
    <name evidence="1" type="synonym">trmE</name>
    <name type="ordered locus">SG2428</name>
</gene>
<proteinExistence type="inferred from homology"/>